<name>SCXI_CENSC</name>
<keyword id="KW-0002">3D-structure</keyword>
<keyword id="KW-0027">Amidation</keyword>
<keyword id="KW-0903">Direct protein sequencing</keyword>
<keyword id="KW-1015">Disulfide bond</keyword>
<keyword id="KW-0872">Ion channel impairing toxin</keyword>
<keyword id="KW-0528">Neurotoxin</keyword>
<keyword id="KW-0964">Secreted</keyword>
<keyword id="KW-0732">Signal</keyword>
<keyword id="KW-0800">Toxin</keyword>
<keyword id="KW-0738">Voltage-gated sodium channel impairing toxin</keyword>
<sequence>MNSLLMITACLVLIGTVWAKDGYLVEKTGCKKTCYKLGENDFCNRECKWKHIGGSYGYCYGFGCYCEGLPDSTQTWPLPNKTCGKK</sequence>
<reference key="1">
    <citation type="journal article" date="2001" name="Toxicon">
        <title>Genes and peptides from the scorpion Centruroides sculpturatus Ewing, that recognize Na(+)-channels.</title>
        <authorList>
            <person name="Corona M."/>
            <person name="Valdez-Cruz N.A."/>
            <person name="Merino E."/>
            <person name="Zurita M."/>
            <person name="Possani L.D."/>
        </authorList>
    </citation>
    <scope>NUCLEOTIDE SEQUENCE [MRNA]</scope>
    <source>
        <tissue>Venom gland</tissue>
    </source>
</reference>
<reference key="2">
    <citation type="journal article" date="1975" name="Arch. Biochem. Biophys.">
        <title>Amino acid sequence of neurotoxin I from Centruroides sculpturatus Ewing.</title>
        <authorList>
            <person name="Babin D.R."/>
            <person name="Watt D.D."/>
            <person name="Goos S.M."/>
            <person name="Mlejnek R.V."/>
        </authorList>
    </citation>
    <scope>PROTEIN SEQUENCE OF 20-83</scope>
</reference>
<reference key="3">
    <citation type="journal article" date="1999" name="Biochem. Biophys. Res. Commun.">
        <title>Solution structure of a beta-neurotoxin from the New World scorpion Centruroides sculpturatus Ewing.</title>
        <authorList>
            <person name="Jablonsky M.J."/>
            <person name="Jackson P.L."/>
            <person name="Trent J.O."/>
            <person name="Watt D.D."/>
            <person name="Krishna N.R."/>
        </authorList>
    </citation>
    <scope>STRUCTURE BY NMR</scope>
    <scope>DISULFIDE BONDS</scope>
</reference>
<dbReference type="EMBL" id="AF338460">
    <property type="protein sequence ID" value="AAL23428.1"/>
    <property type="molecule type" value="mRNA"/>
</dbReference>
<dbReference type="PIR" id="A01751">
    <property type="entry name" value="NTSRIC"/>
</dbReference>
<dbReference type="PDB" id="1B3C">
    <property type="method" value="NMR"/>
    <property type="chains" value="A=20-83"/>
</dbReference>
<dbReference type="PDB" id="2B3C">
    <property type="method" value="NMR"/>
    <property type="chains" value="A=20-83"/>
</dbReference>
<dbReference type="PDBsum" id="1B3C"/>
<dbReference type="PDBsum" id="2B3C"/>
<dbReference type="BMRB" id="P01491"/>
<dbReference type="SMR" id="P01491"/>
<dbReference type="EvolutionaryTrace" id="P01491"/>
<dbReference type="GO" id="GO:0005576">
    <property type="term" value="C:extracellular region"/>
    <property type="evidence" value="ECO:0007669"/>
    <property type="project" value="UniProtKB-SubCell"/>
</dbReference>
<dbReference type="GO" id="GO:0019871">
    <property type="term" value="F:sodium channel inhibitor activity"/>
    <property type="evidence" value="ECO:0007669"/>
    <property type="project" value="InterPro"/>
</dbReference>
<dbReference type="GO" id="GO:0090729">
    <property type="term" value="F:toxin activity"/>
    <property type="evidence" value="ECO:0007669"/>
    <property type="project" value="UniProtKB-KW"/>
</dbReference>
<dbReference type="GO" id="GO:0006952">
    <property type="term" value="P:defense response"/>
    <property type="evidence" value="ECO:0007669"/>
    <property type="project" value="InterPro"/>
</dbReference>
<dbReference type="CDD" id="cd23106">
    <property type="entry name" value="neurotoxins_LC_scorpion"/>
    <property type="match status" value="1"/>
</dbReference>
<dbReference type="FunFam" id="3.30.30.10:FF:000002">
    <property type="entry name" value="Alpha-like toxin BmK-M1"/>
    <property type="match status" value="1"/>
</dbReference>
<dbReference type="Gene3D" id="3.30.30.10">
    <property type="entry name" value="Knottin, scorpion toxin-like"/>
    <property type="match status" value="1"/>
</dbReference>
<dbReference type="InterPro" id="IPR044062">
    <property type="entry name" value="LCN-type_CS_alpha_beta_dom"/>
</dbReference>
<dbReference type="InterPro" id="IPR003614">
    <property type="entry name" value="Scorpion_toxin-like"/>
</dbReference>
<dbReference type="InterPro" id="IPR036574">
    <property type="entry name" value="Scorpion_toxin-like_sf"/>
</dbReference>
<dbReference type="InterPro" id="IPR018218">
    <property type="entry name" value="Scorpion_toxinL"/>
</dbReference>
<dbReference type="InterPro" id="IPR002061">
    <property type="entry name" value="Scorpion_toxinL/defensin"/>
</dbReference>
<dbReference type="Pfam" id="PF00537">
    <property type="entry name" value="Toxin_3"/>
    <property type="match status" value="1"/>
</dbReference>
<dbReference type="PRINTS" id="PR00285">
    <property type="entry name" value="SCORPNTOXIN"/>
</dbReference>
<dbReference type="SMART" id="SM00505">
    <property type="entry name" value="Knot1"/>
    <property type="match status" value="1"/>
</dbReference>
<dbReference type="SUPFAM" id="SSF57095">
    <property type="entry name" value="Scorpion toxin-like"/>
    <property type="match status" value="1"/>
</dbReference>
<dbReference type="PROSITE" id="PS51863">
    <property type="entry name" value="LCN_CSAB"/>
    <property type="match status" value="1"/>
</dbReference>
<protein>
    <recommendedName>
        <fullName>Beta-toxin CsEI</fullName>
        <shortName>CsE-I</shortName>
    </recommendedName>
    <alternativeName>
        <fullName>Neurotoxin I</fullName>
    </alternativeName>
</protein>
<accession>P01491</accession>
<accession>Q95WC1</accession>
<organism>
    <name type="scientific">Centruroides sculpturatus</name>
    <name type="common">Arizona bark scorpion</name>
    <dbReference type="NCBI Taxonomy" id="218467"/>
    <lineage>
        <taxon>Eukaryota</taxon>
        <taxon>Metazoa</taxon>
        <taxon>Ecdysozoa</taxon>
        <taxon>Arthropoda</taxon>
        <taxon>Chelicerata</taxon>
        <taxon>Arachnida</taxon>
        <taxon>Scorpiones</taxon>
        <taxon>Buthida</taxon>
        <taxon>Buthoidea</taxon>
        <taxon>Buthidae</taxon>
        <taxon>Centruroides</taxon>
    </lineage>
</organism>
<evidence type="ECO:0000255" key="1"/>
<evidence type="ECO:0000255" key="2">
    <source>
        <dbReference type="PROSITE-ProRule" id="PRU01210"/>
    </source>
</evidence>
<evidence type="ECO:0000269" key="3">
    <source>
    </source>
</evidence>
<evidence type="ECO:0000269" key="4">
    <source>
    </source>
</evidence>
<evidence type="ECO:0000305" key="5"/>
<evidence type="ECO:0007829" key="6">
    <source>
        <dbReference type="PDB" id="1B3C"/>
    </source>
</evidence>
<comment type="function">
    <text>Beta toxins bind voltage-independently at site-4 of sodium channels (Nav) and shift the voltage of activation toward more negative potentials thereby affecting sodium channel activation and promoting spontaneous and repetitive firing. Affects channels from chicken and frog.</text>
</comment>
<comment type="subcellular location">
    <subcellularLocation>
        <location>Secreted</location>
    </subcellularLocation>
</comment>
<comment type="tissue specificity">
    <text>Expressed by the venom gland.</text>
</comment>
<comment type="domain">
    <text evidence="5">Has the structural arrangement of an alpha-helix connected to antiparallel beta-sheets by disulfide bonds (CS-alpha/beta).</text>
</comment>
<comment type="similarity">
    <text evidence="5">Belongs to the long (4 C-C) scorpion toxin superfamily. Sodium channel inhibitor family. Beta subfamily.</text>
</comment>
<proteinExistence type="evidence at protein level"/>
<feature type="signal peptide" evidence="3">
    <location>
        <begin position="1"/>
        <end position="19"/>
    </location>
</feature>
<feature type="peptide" id="PRO_0000035294" description="Beta-toxin CsEI">
    <location>
        <begin position="20"/>
        <end position="83"/>
    </location>
</feature>
<feature type="domain" description="LCN-type CS-alpha/beta" evidence="2">
    <location>
        <begin position="20"/>
        <end position="84"/>
    </location>
</feature>
<feature type="modified residue" description="Cysteine amide" evidence="1">
    <location>
        <position position="83"/>
    </location>
</feature>
<feature type="disulfide bond" evidence="2 4">
    <location>
        <begin position="30"/>
        <end position="83"/>
    </location>
</feature>
<feature type="disulfide bond" evidence="2 4">
    <location>
        <begin position="34"/>
        <end position="59"/>
    </location>
</feature>
<feature type="disulfide bond" evidence="2 4">
    <location>
        <begin position="43"/>
        <end position="64"/>
    </location>
</feature>
<feature type="disulfide bond" evidence="2 4">
    <location>
        <begin position="47"/>
        <end position="66"/>
    </location>
</feature>
<feature type="sequence conflict" description="In Ref. 1; AAL23428." evidence="5" ref="1">
    <original>C</original>
    <variation>F</variation>
    <location>
        <position position="59"/>
    </location>
</feature>
<feature type="sequence conflict" description="In Ref. 2; AA sequence." evidence="5" ref="2">
    <original>TC</original>
    <variation>CT</variation>
    <location>
        <begin position="82"/>
        <end position="83"/>
    </location>
</feature>
<feature type="strand" evidence="6">
    <location>
        <begin position="21"/>
        <end position="23"/>
    </location>
</feature>
<feature type="helix" evidence="6">
    <location>
        <begin position="41"/>
        <end position="47"/>
    </location>
</feature>
<feature type="strand" evidence="6">
    <location>
        <begin position="48"/>
        <end position="50"/>
    </location>
</feature>
<feature type="strand" evidence="6">
    <location>
        <begin position="56"/>
        <end position="68"/>
    </location>
</feature>
<feature type="strand" evidence="6">
    <location>
        <begin position="79"/>
        <end position="81"/>
    </location>
</feature>